<reference key="1">
    <citation type="journal article" date="1998" name="Microbiology">
        <title>The yvsA-yvqA (293 degrees - 289 degrees) region of the Bacillus subtilis chromosome containing genes involved in metal ion uptake and a putative sigma factor.</title>
        <authorList>
            <person name="Wipat A."/>
            <person name="Brignell C.S."/>
            <person name="Guy J.B."/>
            <person name="Rose M."/>
            <person name="Emmerson P.T."/>
            <person name="Harwood C.R."/>
        </authorList>
    </citation>
    <scope>NUCLEOTIDE SEQUENCE [GENOMIC DNA]</scope>
    <source>
        <strain>168</strain>
    </source>
</reference>
<reference key="2">
    <citation type="journal article" date="1997" name="Nature">
        <title>The complete genome sequence of the Gram-positive bacterium Bacillus subtilis.</title>
        <authorList>
            <person name="Kunst F."/>
            <person name="Ogasawara N."/>
            <person name="Moszer I."/>
            <person name="Albertini A.M."/>
            <person name="Alloni G."/>
            <person name="Azevedo V."/>
            <person name="Bertero M.G."/>
            <person name="Bessieres P."/>
            <person name="Bolotin A."/>
            <person name="Borchert S."/>
            <person name="Borriss R."/>
            <person name="Boursier L."/>
            <person name="Brans A."/>
            <person name="Braun M."/>
            <person name="Brignell S.C."/>
            <person name="Bron S."/>
            <person name="Brouillet S."/>
            <person name="Bruschi C.V."/>
            <person name="Caldwell B."/>
            <person name="Capuano V."/>
            <person name="Carter N.M."/>
            <person name="Choi S.-K."/>
            <person name="Codani J.-J."/>
            <person name="Connerton I.F."/>
            <person name="Cummings N.J."/>
            <person name="Daniel R.A."/>
            <person name="Denizot F."/>
            <person name="Devine K.M."/>
            <person name="Duesterhoeft A."/>
            <person name="Ehrlich S.D."/>
            <person name="Emmerson P.T."/>
            <person name="Entian K.-D."/>
            <person name="Errington J."/>
            <person name="Fabret C."/>
            <person name="Ferrari E."/>
            <person name="Foulger D."/>
            <person name="Fritz C."/>
            <person name="Fujita M."/>
            <person name="Fujita Y."/>
            <person name="Fuma S."/>
            <person name="Galizzi A."/>
            <person name="Galleron N."/>
            <person name="Ghim S.-Y."/>
            <person name="Glaser P."/>
            <person name="Goffeau A."/>
            <person name="Golightly E.J."/>
            <person name="Grandi G."/>
            <person name="Guiseppi G."/>
            <person name="Guy B.J."/>
            <person name="Haga K."/>
            <person name="Haiech J."/>
            <person name="Harwood C.R."/>
            <person name="Henaut A."/>
            <person name="Hilbert H."/>
            <person name="Holsappel S."/>
            <person name="Hosono S."/>
            <person name="Hullo M.-F."/>
            <person name="Itaya M."/>
            <person name="Jones L.-M."/>
            <person name="Joris B."/>
            <person name="Karamata D."/>
            <person name="Kasahara Y."/>
            <person name="Klaerr-Blanchard M."/>
            <person name="Klein C."/>
            <person name="Kobayashi Y."/>
            <person name="Koetter P."/>
            <person name="Koningstein G."/>
            <person name="Krogh S."/>
            <person name="Kumano M."/>
            <person name="Kurita K."/>
            <person name="Lapidus A."/>
            <person name="Lardinois S."/>
            <person name="Lauber J."/>
            <person name="Lazarevic V."/>
            <person name="Lee S.-M."/>
            <person name="Levine A."/>
            <person name="Liu H."/>
            <person name="Masuda S."/>
            <person name="Mauel C."/>
            <person name="Medigue C."/>
            <person name="Medina N."/>
            <person name="Mellado R.P."/>
            <person name="Mizuno M."/>
            <person name="Moestl D."/>
            <person name="Nakai S."/>
            <person name="Noback M."/>
            <person name="Noone D."/>
            <person name="O'Reilly M."/>
            <person name="Ogawa K."/>
            <person name="Ogiwara A."/>
            <person name="Oudega B."/>
            <person name="Park S.-H."/>
            <person name="Parro V."/>
            <person name="Pohl T.M."/>
            <person name="Portetelle D."/>
            <person name="Porwollik S."/>
            <person name="Prescott A.M."/>
            <person name="Presecan E."/>
            <person name="Pujic P."/>
            <person name="Purnelle B."/>
            <person name="Rapoport G."/>
            <person name="Rey M."/>
            <person name="Reynolds S."/>
            <person name="Rieger M."/>
            <person name="Rivolta C."/>
            <person name="Rocha E."/>
            <person name="Roche B."/>
            <person name="Rose M."/>
            <person name="Sadaie Y."/>
            <person name="Sato T."/>
            <person name="Scanlan E."/>
            <person name="Schleich S."/>
            <person name="Schroeter R."/>
            <person name="Scoffone F."/>
            <person name="Sekiguchi J."/>
            <person name="Sekowska A."/>
            <person name="Seror S.J."/>
            <person name="Serror P."/>
            <person name="Shin B.-S."/>
            <person name="Soldo B."/>
            <person name="Sorokin A."/>
            <person name="Tacconi E."/>
            <person name="Takagi T."/>
            <person name="Takahashi H."/>
            <person name="Takemaru K."/>
            <person name="Takeuchi M."/>
            <person name="Tamakoshi A."/>
            <person name="Tanaka T."/>
            <person name="Terpstra P."/>
            <person name="Tognoni A."/>
            <person name="Tosato V."/>
            <person name="Uchiyama S."/>
            <person name="Vandenbol M."/>
            <person name="Vannier F."/>
            <person name="Vassarotti A."/>
            <person name="Viari A."/>
            <person name="Wambutt R."/>
            <person name="Wedler E."/>
            <person name="Wedler H."/>
            <person name="Weitzenegger T."/>
            <person name="Winters P."/>
            <person name="Wipat A."/>
            <person name="Yamamoto H."/>
            <person name="Yamane K."/>
            <person name="Yasumoto K."/>
            <person name="Yata K."/>
            <person name="Yoshida K."/>
            <person name="Yoshikawa H.-F."/>
            <person name="Zumstein E."/>
            <person name="Yoshikawa H."/>
            <person name="Danchin A."/>
        </authorList>
    </citation>
    <scope>NUCLEOTIDE SEQUENCE [LARGE SCALE GENOMIC DNA]</scope>
    <source>
        <strain>168</strain>
    </source>
</reference>
<reference key="3">
    <citation type="journal article" date="2001" name="J. Biosci. Bioeng.">
        <title>Glycolaldehyde-forming route in Bacillus subtilis in relation to vitamin B6 biosynthesis.</title>
        <authorList>
            <person name="Sakai A."/>
            <person name="Katayama K."/>
            <person name="Katsuragi T."/>
            <person name="Tani Y."/>
        </authorList>
    </citation>
    <scope>PROTEIN SEQUENCE OF 2-31</scope>
    <scope>FUNCTION</scope>
    <source>
        <strain>CRK6000</strain>
        <strain>IFO 3007</strain>
    </source>
</reference>
<evidence type="ECO:0000250" key="1"/>
<evidence type="ECO:0000269" key="2">
    <source>
    </source>
</evidence>
<evidence type="ECO:0000305" key="3"/>
<evidence type="ECO:0007829" key="4">
    <source>
        <dbReference type="PDB" id="3F7J"/>
    </source>
</evidence>
<name>GR_BACSU</name>
<accession>O32210</accession>
<accession>Q7B2L2</accession>
<sequence>MPTSLKDTVKLHNGVEMPWFGLGVFKVENGNEATESVKAAIKNGYRSIDTAAIYKNEEGVGIGIKESGVAREELFITSKVWNEDQGYETTLAAFEKSLERLQLDYLDLYLIHWPGKDKYKDTWRALEKLYKDGKIRAIGVSNFQVHHLEELLKDAEIKPMVNQVEFHPRLTQKELRDYCKGQGIQLEAWSPLMQGQLLDNEVLTQIAEKHNKSVAQVILRWDLQHGVVTIPKSIKEHRIIENADIFDFELSQEDMDKIDALNKDERVGPNPDELLF</sequence>
<comment type="function">
    <text evidence="2">Reduces glyoxal and methylglyoxal (2-oxopropanal). Is not involved in the vitamin B6 biosynthesis.</text>
</comment>
<comment type="catalytic activity">
    <reaction>
        <text>(S)-lactaldehyde + NADP(+) = methylglyoxal + NADPH + H(+)</text>
        <dbReference type="Rhea" id="RHEA:21748"/>
        <dbReference type="ChEBI" id="CHEBI:15378"/>
        <dbReference type="ChEBI" id="CHEBI:17158"/>
        <dbReference type="ChEBI" id="CHEBI:18041"/>
        <dbReference type="ChEBI" id="CHEBI:57783"/>
        <dbReference type="ChEBI" id="CHEBI:58349"/>
        <dbReference type="EC" id="1.1.1.283"/>
    </reaction>
</comment>
<comment type="similarity">
    <text evidence="3">Belongs to the aldo/keto reductase family.</text>
</comment>
<proteinExistence type="evidence at protein level"/>
<protein>
    <recommendedName>
        <fullName>Glyoxal reductase</fullName>
        <shortName>GR</shortName>
        <ecNumber>1.1.1.-</ecNumber>
    </recommendedName>
    <alternativeName>
        <fullName>Methylglyoxal reductase</fullName>
        <ecNumber>1.1.1.283</ecNumber>
    </alternativeName>
</protein>
<keyword id="KW-0002">3D-structure</keyword>
<keyword id="KW-0903">Direct protein sequencing</keyword>
<keyword id="KW-0521">NADP</keyword>
<keyword id="KW-0560">Oxidoreductase</keyword>
<keyword id="KW-1185">Reference proteome</keyword>
<feature type="initiator methionine" description="Removed" evidence="2">
    <location>
        <position position="1"/>
    </location>
</feature>
<feature type="chain" id="PRO_0000360642" description="Glyoxal reductase">
    <location>
        <begin position="2"/>
        <end position="276"/>
    </location>
</feature>
<feature type="active site" description="Proton donor" evidence="1">
    <location>
        <position position="54"/>
    </location>
</feature>
<feature type="binding site" evidence="1">
    <location>
        <position position="112"/>
    </location>
    <ligand>
        <name>substrate</name>
    </ligand>
</feature>
<feature type="binding site" evidence="1">
    <location>
        <begin position="190"/>
        <end position="242"/>
    </location>
    <ligand>
        <name>NADP(+)</name>
        <dbReference type="ChEBI" id="CHEBI:58349"/>
    </ligand>
</feature>
<feature type="strand" evidence="4">
    <location>
        <begin position="8"/>
        <end position="10"/>
    </location>
</feature>
<feature type="strand" evidence="4">
    <location>
        <begin position="16"/>
        <end position="20"/>
    </location>
</feature>
<feature type="helix" evidence="4">
    <location>
        <begin position="31"/>
        <end position="42"/>
    </location>
</feature>
<feature type="strand" evidence="4">
    <location>
        <begin position="47"/>
        <end position="49"/>
    </location>
</feature>
<feature type="helix" evidence="4">
    <location>
        <begin position="52"/>
        <end position="54"/>
    </location>
</feature>
<feature type="helix" evidence="4">
    <location>
        <begin position="57"/>
        <end position="67"/>
    </location>
</feature>
<feature type="helix" evidence="4">
    <location>
        <begin position="71"/>
        <end position="73"/>
    </location>
</feature>
<feature type="strand" evidence="4">
    <location>
        <begin position="75"/>
        <end position="80"/>
    </location>
</feature>
<feature type="helix" evidence="4">
    <location>
        <begin position="82"/>
        <end position="84"/>
    </location>
</feature>
<feature type="helix" evidence="4">
    <location>
        <begin position="87"/>
        <end position="101"/>
    </location>
</feature>
<feature type="strand" evidence="4">
    <location>
        <begin position="106"/>
        <end position="112"/>
    </location>
</feature>
<feature type="turn" evidence="4">
    <location>
        <begin position="115"/>
        <end position="117"/>
    </location>
</feature>
<feature type="helix" evidence="4">
    <location>
        <begin position="119"/>
        <end position="131"/>
    </location>
</feature>
<feature type="strand" evidence="4">
    <location>
        <begin position="134"/>
        <end position="142"/>
    </location>
</feature>
<feature type="helix" evidence="4">
    <location>
        <begin position="145"/>
        <end position="154"/>
    </location>
</feature>
<feature type="strand" evidence="4">
    <location>
        <begin position="160"/>
        <end position="165"/>
    </location>
</feature>
<feature type="helix" evidence="4">
    <location>
        <begin position="173"/>
        <end position="182"/>
    </location>
</feature>
<feature type="strand" evidence="4">
    <location>
        <begin position="185"/>
        <end position="190"/>
    </location>
</feature>
<feature type="helix" evidence="4">
    <location>
        <begin position="193"/>
        <end position="195"/>
    </location>
</feature>
<feature type="turn" evidence="4">
    <location>
        <begin position="196"/>
        <end position="199"/>
    </location>
</feature>
<feature type="helix" evidence="4">
    <location>
        <begin position="201"/>
        <end position="210"/>
    </location>
</feature>
<feature type="helix" evidence="4">
    <location>
        <begin position="214"/>
        <end position="224"/>
    </location>
</feature>
<feature type="helix" evidence="4">
    <location>
        <begin position="236"/>
        <end position="242"/>
    </location>
</feature>
<feature type="helix" evidence="4">
    <location>
        <begin position="252"/>
        <end position="259"/>
    </location>
</feature>
<feature type="turn" evidence="4">
    <location>
        <begin position="271"/>
        <end position="273"/>
    </location>
</feature>
<dbReference type="EC" id="1.1.1.-"/>
<dbReference type="EC" id="1.1.1.283"/>
<dbReference type="EMBL" id="AJ223978">
    <property type="protein sequence ID" value="CAA11712.1"/>
    <property type="molecule type" value="Genomic_DNA"/>
</dbReference>
<dbReference type="EMBL" id="AL009126">
    <property type="protein sequence ID" value="CAB15345.1"/>
    <property type="molecule type" value="Genomic_DNA"/>
</dbReference>
<dbReference type="PIR" id="C70040">
    <property type="entry name" value="C70040"/>
</dbReference>
<dbReference type="PDB" id="3D3F">
    <property type="method" value="X-ray"/>
    <property type="resolution" value="2.40 A"/>
    <property type="chains" value="A/B=2-276"/>
</dbReference>
<dbReference type="PDB" id="3F7J">
    <property type="method" value="X-ray"/>
    <property type="resolution" value="1.70 A"/>
    <property type="chains" value="A/B=1-276"/>
</dbReference>
<dbReference type="PDBsum" id="3D3F"/>
<dbReference type="PDBsum" id="3F7J"/>
<dbReference type="SMR" id="O32210"/>
<dbReference type="FunCoup" id="O32210">
    <property type="interactions" value="396"/>
</dbReference>
<dbReference type="IntAct" id="O32210">
    <property type="interactions" value="1"/>
</dbReference>
<dbReference type="MINT" id="O32210"/>
<dbReference type="STRING" id="224308.BSU33400"/>
<dbReference type="jPOST" id="O32210"/>
<dbReference type="PaxDb" id="224308-BSU33400"/>
<dbReference type="EnsemblBacteria" id="CAB15345">
    <property type="protein sequence ID" value="CAB15345"/>
    <property type="gene ID" value="BSU_33400"/>
</dbReference>
<dbReference type="GeneID" id="936001"/>
<dbReference type="KEGG" id="bsu:BSU33400"/>
<dbReference type="PATRIC" id="fig|224308.179.peg.3625"/>
<dbReference type="eggNOG" id="COG0656">
    <property type="taxonomic scope" value="Bacteria"/>
</dbReference>
<dbReference type="InParanoid" id="O32210"/>
<dbReference type="OrthoDB" id="9804790at2"/>
<dbReference type="PhylomeDB" id="O32210"/>
<dbReference type="BioCyc" id="BSUB:BSU33400-MONOMER"/>
<dbReference type="BioCyc" id="MetaCyc:BSU33400-MONOMER"/>
<dbReference type="EvolutionaryTrace" id="O32210"/>
<dbReference type="Proteomes" id="UP000001570">
    <property type="component" value="Chromosome"/>
</dbReference>
<dbReference type="GO" id="GO:0004033">
    <property type="term" value="F:aldo-keto reductase (NADPH) activity"/>
    <property type="evidence" value="ECO:0000318"/>
    <property type="project" value="GO_Central"/>
</dbReference>
<dbReference type="GO" id="GO:0043892">
    <property type="term" value="F:methylglyoxal reductase (NADPH) activity"/>
    <property type="evidence" value="ECO:0007669"/>
    <property type="project" value="UniProtKB-EC"/>
</dbReference>
<dbReference type="CDD" id="cd19157">
    <property type="entry name" value="AKR_AKR5G1-3"/>
    <property type="match status" value="1"/>
</dbReference>
<dbReference type="FunFam" id="3.20.20.100:FF:000015">
    <property type="entry name" value="Oxidoreductase, aldo/keto reductase family"/>
    <property type="match status" value="1"/>
</dbReference>
<dbReference type="Gene3D" id="3.20.20.100">
    <property type="entry name" value="NADP-dependent oxidoreductase domain"/>
    <property type="match status" value="1"/>
</dbReference>
<dbReference type="InterPro" id="IPR020471">
    <property type="entry name" value="AKR"/>
</dbReference>
<dbReference type="InterPro" id="IPR044500">
    <property type="entry name" value="AKR5G"/>
</dbReference>
<dbReference type="InterPro" id="IPR018170">
    <property type="entry name" value="Aldo/ket_reductase_CS"/>
</dbReference>
<dbReference type="InterPro" id="IPR023210">
    <property type="entry name" value="NADP_OxRdtase_dom"/>
</dbReference>
<dbReference type="InterPro" id="IPR036812">
    <property type="entry name" value="NADP_OxRdtase_dom_sf"/>
</dbReference>
<dbReference type="PANTHER" id="PTHR43827">
    <property type="entry name" value="2,5-DIKETO-D-GLUCONIC ACID REDUCTASE"/>
    <property type="match status" value="1"/>
</dbReference>
<dbReference type="PANTHER" id="PTHR43827:SF3">
    <property type="entry name" value="NADP-DEPENDENT OXIDOREDUCTASE DOMAIN-CONTAINING PROTEIN"/>
    <property type="match status" value="1"/>
</dbReference>
<dbReference type="Pfam" id="PF00248">
    <property type="entry name" value="Aldo_ket_red"/>
    <property type="match status" value="1"/>
</dbReference>
<dbReference type="PIRSF" id="PIRSF000097">
    <property type="entry name" value="AKR"/>
    <property type="match status" value="1"/>
</dbReference>
<dbReference type="PRINTS" id="PR00069">
    <property type="entry name" value="ALDKETRDTASE"/>
</dbReference>
<dbReference type="SUPFAM" id="SSF51430">
    <property type="entry name" value="NAD(P)-linked oxidoreductase"/>
    <property type="match status" value="1"/>
</dbReference>
<dbReference type="PROSITE" id="PS00798">
    <property type="entry name" value="ALDOKETO_REDUCTASE_1"/>
    <property type="match status" value="1"/>
</dbReference>
<dbReference type="PROSITE" id="PS00062">
    <property type="entry name" value="ALDOKETO_REDUCTASE_2"/>
    <property type="match status" value="1"/>
</dbReference>
<dbReference type="PROSITE" id="PS00063">
    <property type="entry name" value="ALDOKETO_REDUCTASE_3"/>
    <property type="match status" value="1"/>
</dbReference>
<organism>
    <name type="scientific">Bacillus subtilis (strain 168)</name>
    <dbReference type="NCBI Taxonomy" id="224308"/>
    <lineage>
        <taxon>Bacteria</taxon>
        <taxon>Bacillati</taxon>
        <taxon>Bacillota</taxon>
        <taxon>Bacilli</taxon>
        <taxon>Bacillales</taxon>
        <taxon>Bacillaceae</taxon>
        <taxon>Bacillus</taxon>
    </lineage>
</organism>
<gene>
    <name type="primary">yvgN</name>
    <name type="ordered locus">BSU33400</name>
</gene>